<keyword id="KW-0285">Flavoprotein</keyword>
<keyword id="KW-0288">FMN</keyword>
<keyword id="KW-0520">NAD</keyword>
<keyword id="KW-0521">NADP</keyword>
<keyword id="KW-0547">Nucleotide-binding</keyword>
<keyword id="KW-0560">Oxidoreductase</keyword>
<protein>
    <recommendedName>
        <fullName evidence="1">NAD(P)H dehydrogenase (quinone)</fullName>
        <ecNumber evidence="1">1.6.5.2</ecNumber>
    </recommendedName>
    <alternativeName>
        <fullName>Flavoprotein WrbA</fullName>
    </alternativeName>
    <alternativeName>
        <fullName evidence="1">NAD(P)H:quinone oxidoreductase</fullName>
        <shortName evidence="1">NQO</shortName>
    </alternativeName>
</protein>
<dbReference type="EC" id="1.6.5.2" evidence="1"/>
<dbReference type="EMBL" id="CP000826">
    <property type="protein sequence ID" value="ABV40916.1"/>
    <property type="molecule type" value="Genomic_DNA"/>
</dbReference>
<dbReference type="SMR" id="A8GCS6"/>
<dbReference type="STRING" id="399741.Spro_1813"/>
<dbReference type="KEGG" id="spe:Spro_1813"/>
<dbReference type="eggNOG" id="COG0655">
    <property type="taxonomic scope" value="Bacteria"/>
</dbReference>
<dbReference type="HOGENOM" id="CLU_051402_0_2_6"/>
<dbReference type="OrthoDB" id="9801479at2"/>
<dbReference type="GO" id="GO:0016020">
    <property type="term" value="C:membrane"/>
    <property type="evidence" value="ECO:0007669"/>
    <property type="project" value="TreeGrafter"/>
</dbReference>
<dbReference type="GO" id="GO:0050660">
    <property type="term" value="F:flavin adenine dinucleotide binding"/>
    <property type="evidence" value="ECO:0007669"/>
    <property type="project" value="UniProtKB-UniRule"/>
</dbReference>
<dbReference type="GO" id="GO:0010181">
    <property type="term" value="F:FMN binding"/>
    <property type="evidence" value="ECO:0007669"/>
    <property type="project" value="InterPro"/>
</dbReference>
<dbReference type="GO" id="GO:0051287">
    <property type="term" value="F:NAD binding"/>
    <property type="evidence" value="ECO:0007669"/>
    <property type="project" value="UniProtKB-UniRule"/>
</dbReference>
<dbReference type="GO" id="GO:0050136">
    <property type="term" value="F:NADH:ubiquinone reductase (non-electrogenic) activity"/>
    <property type="evidence" value="ECO:0007669"/>
    <property type="project" value="RHEA"/>
</dbReference>
<dbReference type="GO" id="GO:0050661">
    <property type="term" value="F:NADP binding"/>
    <property type="evidence" value="ECO:0007669"/>
    <property type="project" value="UniProtKB-UniRule"/>
</dbReference>
<dbReference type="GO" id="GO:0008753">
    <property type="term" value="F:NADPH dehydrogenase (quinone) activity"/>
    <property type="evidence" value="ECO:0007669"/>
    <property type="project" value="RHEA"/>
</dbReference>
<dbReference type="FunFam" id="3.40.50.360:FF:000001">
    <property type="entry name" value="NAD(P)H dehydrogenase (Quinone) FQR1-like"/>
    <property type="match status" value="1"/>
</dbReference>
<dbReference type="Gene3D" id="3.40.50.360">
    <property type="match status" value="1"/>
</dbReference>
<dbReference type="HAMAP" id="MF_01017">
    <property type="entry name" value="NQOR"/>
    <property type="match status" value="1"/>
</dbReference>
<dbReference type="InterPro" id="IPR008254">
    <property type="entry name" value="Flavodoxin/NO_synth"/>
</dbReference>
<dbReference type="InterPro" id="IPR029039">
    <property type="entry name" value="Flavoprotein-like_sf"/>
</dbReference>
<dbReference type="InterPro" id="IPR010089">
    <property type="entry name" value="Flavoprotein_WrbA-like"/>
</dbReference>
<dbReference type="InterPro" id="IPR005025">
    <property type="entry name" value="FMN_Rdtase-like_dom"/>
</dbReference>
<dbReference type="InterPro" id="IPR037513">
    <property type="entry name" value="NQO"/>
</dbReference>
<dbReference type="NCBIfam" id="TIGR01755">
    <property type="entry name" value="flav_wrbA"/>
    <property type="match status" value="1"/>
</dbReference>
<dbReference type="NCBIfam" id="NF002999">
    <property type="entry name" value="PRK03767.1"/>
    <property type="match status" value="1"/>
</dbReference>
<dbReference type="PANTHER" id="PTHR30546">
    <property type="entry name" value="FLAVODOXIN-RELATED PROTEIN WRBA-RELATED"/>
    <property type="match status" value="1"/>
</dbReference>
<dbReference type="PANTHER" id="PTHR30546:SF23">
    <property type="entry name" value="FLAVOPROTEIN-LIKE PROTEIN YCP4-RELATED"/>
    <property type="match status" value="1"/>
</dbReference>
<dbReference type="Pfam" id="PF03358">
    <property type="entry name" value="FMN_red"/>
    <property type="match status" value="1"/>
</dbReference>
<dbReference type="SUPFAM" id="SSF52218">
    <property type="entry name" value="Flavoproteins"/>
    <property type="match status" value="1"/>
</dbReference>
<dbReference type="PROSITE" id="PS50902">
    <property type="entry name" value="FLAVODOXIN_LIKE"/>
    <property type="match status" value="1"/>
</dbReference>
<proteinExistence type="inferred from homology"/>
<comment type="catalytic activity">
    <reaction evidence="1">
        <text>a quinone + NADH + H(+) = a quinol + NAD(+)</text>
        <dbReference type="Rhea" id="RHEA:46160"/>
        <dbReference type="ChEBI" id="CHEBI:15378"/>
        <dbReference type="ChEBI" id="CHEBI:24646"/>
        <dbReference type="ChEBI" id="CHEBI:57540"/>
        <dbReference type="ChEBI" id="CHEBI:57945"/>
        <dbReference type="ChEBI" id="CHEBI:132124"/>
        <dbReference type="EC" id="1.6.5.2"/>
    </reaction>
</comment>
<comment type="catalytic activity">
    <reaction evidence="1">
        <text>a quinone + NADPH + H(+) = a quinol + NADP(+)</text>
        <dbReference type="Rhea" id="RHEA:46164"/>
        <dbReference type="ChEBI" id="CHEBI:15378"/>
        <dbReference type="ChEBI" id="CHEBI:24646"/>
        <dbReference type="ChEBI" id="CHEBI:57783"/>
        <dbReference type="ChEBI" id="CHEBI:58349"/>
        <dbReference type="ChEBI" id="CHEBI:132124"/>
        <dbReference type="EC" id="1.6.5.2"/>
    </reaction>
</comment>
<comment type="cofactor">
    <cofactor evidence="1">
        <name>FMN</name>
        <dbReference type="ChEBI" id="CHEBI:58210"/>
    </cofactor>
    <text evidence="1">Binds 1 FMN per monomer.</text>
</comment>
<comment type="similarity">
    <text evidence="1">Belongs to the WrbA family.</text>
</comment>
<organism>
    <name type="scientific">Serratia proteamaculans (strain 568)</name>
    <dbReference type="NCBI Taxonomy" id="399741"/>
    <lineage>
        <taxon>Bacteria</taxon>
        <taxon>Pseudomonadati</taxon>
        <taxon>Pseudomonadota</taxon>
        <taxon>Gammaproteobacteria</taxon>
        <taxon>Enterobacterales</taxon>
        <taxon>Yersiniaceae</taxon>
        <taxon>Serratia</taxon>
    </lineage>
</organism>
<reference key="1">
    <citation type="submission" date="2007-09" db="EMBL/GenBank/DDBJ databases">
        <title>Complete sequence of chromosome of Serratia proteamaculans 568.</title>
        <authorList>
            <consortium name="US DOE Joint Genome Institute"/>
            <person name="Copeland A."/>
            <person name="Lucas S."/>
            <person name="Lapidus A."/>
            <person name="Barry K."/>
            <person name="Glavina del Rio T."/>
            <person name="Dalin E."/>
            <person name="Tice H."/>
            <person name="Pitluck S."/>
            <person name="Chain P."/>
            <person name="Malfatti S."/>
            <person name="Shin M."/>
            <person name="Vergez L."/>
            <person name="Schmutz J."/>
            <person name="Larimer F."/>
            <person name="Land M."/>
            <person name="Hauser L."/>
            <person name="Kyrpides N."/>
            <person name="Kim E."/>
            <person name="Taghavi S."/>
            <person name="Newman L."/>
            <person name="Vangronsveld J."/>
            <person name="van der Lelie D."/>
            <person name="Richardson P."/>
        </authorList>
    </citation>
    <scope>NUCLEOTIDE SEQUENCE [LARGE SCALE GENOMIC DNA]</scope>
    <source>
        <strain>568</strain>
    </source>
</reference>
<evidence type="ECO:0000255" key="1">
    <source>
        <dbReference type="HAMAP-Rule" id="MF_01017"/>
    </source>
</evidence>
<feature type="chain" id="PRO_1000084147" description="NAD(P)H dehydrogenase (quinone)">
    <location>
        <begin position="1"/>
        <end position="199"/>
    </location>
</feature>
<feature type="domain" description="Flavodoxin-like" evidence="1">
    <location>
        <begin position="4"/>
        <end position="190"/>
    </location>
</feature>
<feature type="binding site" evidence="1">
    <location>
        <begin position="10"/>
        <end position="15"/>
    </location>
    <ligand>
        <name>FMN</name>
        <dbReference type="ChEBI" id="CHEBI:58210"/>
    </ligand>
</feature>
<feature type="binding site" evidence="1">
    <location>
        <position position="12"/>
    </location>
    <ligand>
        <name>NAD(+)</name>
        <dbReference type="ChEBI" id="CHEBI:57540"/>
    </ligand>
</feature>
<feature type="binding site" evidence="1">
    <location>
        <begin position="79"/>
        <end position="81"/>
    </location>
    <ligand>
        <name>FMN</name>
        <dbReference type="ChEBI" id="CHEBI:58210"/>
    </ligand>
</feature>
<feature type="binding site" evidence="1">
    <location>
        <position position="99"/>
    </location>
    <ligand>
        <name>substrate</name>
    </ligand>
</feature>
<feature type="binding site" evidence="1">
    <location>
        <begin position="114"/>
        <end position="119"/>
    </location>
    <ligand>
        <name>FMN</name>
        <dbReference type="ChEBI" id="CHEBI:58210"/>
    </ligand>
</feature>
<feature type="binding site" evidence="1">
    <location>
        <position position="134"/>
    </location>
    <ligand>
        <name>FMN</name>
        <dbReference type="ChEBI" id="CHEBI:58210"/>
    </ligand>
</feature>
<gene>
    <name type="ordered locus">Spro_1813</name>
</gene>
<name>NQOR_SERP5</name>
<sequence>MAKILVLYYSMYGHIETLAEAVAEGARRVSGVEVTLKRVPETIPAEAFAKAGGKQDQKAPVASPQELADYDGIIFGTPTRFGNMAGQMRTFLDQTGGLWASGALYGKVGSVFSSTGTGGGQEHTITSTWTTLAHHGFIIVPIGYATPELFDVSHVRGGTPYGATTIAGGDGSRQPSQEELTIARYQGEHVAKITAKLKS</sequence>
<accession>A8GCS6</accession>